<keyword id="KW-0028">Amino-acid biosynthesis</keyword>
<keyword id="KW-0057">Aromatic amino acid biosynthesis</keyword>
<keyword id="KW-0456">Lyase</keyword>
<keyword id="KW-1185">Reference proteome</keyword>
<sequence>MSNIIIVINGPNLNMLGKREPGIYGGKTLKDIENDCVNAGADLGFSVEFRQSNHEGVLVDWLHEAGERAAGVVINPGAYSHTSIALHDAIRAISTPVVEVHISNIHAREEFRHKSMVSPAAKGMICGFGPYGYVMALHALKNITA</sequence>
<organism>
    <name type="scientific">Agrobacterium fabrum (strain C58 / ATCC 33970)</name>
    <name type="common">Agrobacterium tumefaciens (strain C58)</name>
    <dbReference type="NCBI Taxonomy" id="176299"/>
    <lineage>
        <taxon>Bacteria</taxon>
        <taxon>Pseudomonadati</taxon>
        <taxon>Pseudomonadota</taxon>
        <taxon>Alphaproteobacteria</taxon>
        <taxon>Hyphomicrobiales</taxon>
        <taxon>Rhizobiaceae</taxon>
        <taxon>Rhizobium/Agrobacterium group</taxon>
        <taxon>Agrobacterium</taxon>
        <taxon>Agrobacterium tumefaciens complex</taxon>
    </lineage>
</organism>
<reference key="1">
    <citation type="journal article" date="2001" name="Science">
        <title>The genome of the natural genetic engineer Agrobacterium tumefaciens C58.</title>
        <authorList>
            <person name="Wood D.W."/>
            <person name="Setubal J.C."/>
            <person name="Kaul R."/>
            <person name="Monks D.E."/>
            <person name="Kitajima J.P."/>
            <person name="Okura V.K."/>
            <person name="Zhou Y."/>
            <person name="Chen L."/>
            <person name="Wood G.E."/>
            <person name="Almeida N.F. Jr."/>
            <person name="Woo L."/>
            <person name="Chen Y."/>
            <person name="Paulsen I.T."/>
            <person name="Eisen J.A."/>
            <person name="Karp P.D."/>
            <person name="Bovee D. Sr."/>
            <person name="Chapman P."/>
            <person name="Clendenning J."/>
            <person name="Deatherage G."/>
            <person name="Gillet W."/>
            <person name="Grant C."/>
            <person name="Kutyavin T."/>
            <person name="Levy R."/>
            <person name="Li M.-J."/>
            <person name="McClelland E."/>
            <person name="Palmieri A."/>
            <person name="Raymond C."/>
            <person name="Rouse G."/>
            <person name="Saenphimmachak C."/>
            <person name="Wu Z."/>
            <person name="Romero P."/>
            <person name="Gordon D."/>
            <person name="Zhang S."/>
            <person name="Yoo H."/>
            <person name="Tao Y."/>
            <person name="Biddle P."/>
            <person name="Jung M."/>
            <person name="Krespan W."/>
            <person name="Perry M."/>
            <person name="Gordon-Kamm B."/>
            <person name="Liao L."/>
            <person name="Kim S."/>
            <person name="Hendrick C."/>
            <person name="Zhao Z.-Y."/>
            <person name="Dolan M."/>
            <person name="Chumley F."/>
            <person name="Tingey S.V."/>
            <person name="Tomb J.-F."/>
            <person name="Gordon M.P."/>
            <person name="Olson M.V."/>
            <person name="Nester E.W."/>
        </authorList>
    </citation>
    <scope>NUCLEOTIDE SEQUENCE [LARGE SCALE GENOMIC DNA]</scope>
    <source>
        <strain>C58 / ATCC 33970</strain>
    </source>
</reference>
<reference key="2">
    <citation type="journal article" date="2001" name="Science">
        <title>Genome sequence of the plant pathogen and biotechnology agent Agrobacterium tumefaciens C58.</title>
        <authorList>
            <person name="Goodner B."/>
            <person name="Hinkle G."/>
            <person name="Gattung S."/>
            <person name="Miller N."/>
            <person name="Blanchard M."/>
            <person name="Qurollo B."/>
            <person name="Goldman B.S."/>
            <person name="Cao Y."/>
            <person name="Askenazi M."/>
            <person name="Halling C."/>
            <person name="Mullin L."/>
            <person name="Houmiel K."/>
            <person name="Gordon J."/>
            <person name="Vaudin M."/>
            <person name="Iartchouk O."/>
            <person name="Epp A."/>
            <person name="Liu F."/>
            <person name="Wollam C."/>
            <person name="Allinger M."/>
            <person name="Doughty D."/>
            <person name="Scott C."/>
            <person name="Lappas C."/>
            <person name="Markelz B."/>
            <person name="Flanagan C."/>
            <person name="Crowell C."/>
            <person name="Gurson J."/>
            <person name="Lomo C."/>
            <person name="Sear C."/>
            <person name="Strub G."/>
            <person name="Cielo C."/>
            <person name="Slater S."/>
        </authorList>
    </citation>
    <scope>NUCLEOTIDE SEQUENCE [LARGE SCALE GENOMIC DNA]</scope>
    <source>
        <strain>C58 / ATCC 33970</strain>
    </source>
</reference>
<evidence type="ECO:0000250" key="1"/>
<evidence type="ECO:0000305" key="2"/>
<accession>Q8UFR5</accession>
<protein>
    <recommendedName>
        <fullName>3-dehydroquinate dehydratase 1</fullName>
        <shortName>3-dehydroquinase 1</shortName>
        <ecNumber>4.2.1.10</ecNumber>
    </recommendedName>
    <alternativeName>
        <fullName>Type II DHQase 1</fullName>
    </alternativeName>
</protein>
<proteinExistence type="inferred from homology"/>
<dbReference type="EC" id="4.2.1.10"/>
<dbReference type="EMBL" id="AE007869">
    <property type="protein sequence ID" value="AAK87123.2"/>
    <property type="molecule type" value="Genomic_DNA"/>
</dbReference>
<dbReference type="PIR" id="AD2740">
    <property type="entry name" value="AD2740"/>
</dbReference>
<dbReference type="PIR" id="B97521">
    <property type="entry name" value="B97521"/>
</dbReference>
<dbReference type="RefSeq" id="NP_354338.2">
    <property type="nucleotide sequence ID" value="NC_003062.2"/>
</dbReference>
<dbReference type="RefSeq" id="WP_006312617.1">
    <property type="nucleotide sequence ID" value="NC_003062.2"/>
</dbReference>
<dbReference type="SMR" id="Q8UFR5"/>
<dbReference type="STRING" id="176299.Atu1332"/>
<dbReference type="EnsemblBacteria" id="AAK87123">
    <property type="protein sequence ID" value="AAK87123"/>
    <property type="gene ID" value="Atu1332"/>
</dbReference>
<dbReference type="GeneID" id="1133370"/>
<dbReference type="KEGG" id="atu:Atu1332"/>
<dbReference type="PATRIC" id="fig|176299.10.peg.1349"/>
<dbReference type="eggNOG" id="COG0757">
    <property type="taxonomic scope" value="Bacteria"/>
</dbReference>
<dbReference type="HOGENOM" id="CLU_090968_2_0_5"/>
<dbReference type="OrthoDB" id="9790793at2"/>
<dbReference type="PhylomeDB" id="Q8UFR5"/>
<dbReference type="BioCyc" id="AGRO:ATU1332-MONOMER"/>
<dbReference type="UniPathway" id="UPA00053">
    <property type="reaction ID" value="UER00086"/>
</dbReference>
<dbReference type="Proteomes" id="UP000000813">
    <property type="component" value="Chromosome circular"/>
</dbReference>
<dbReference type="GO" id="GO:0003855">
    <property type="term" value="F:3-dehydroquinate dehydratase activity"/>
    <property type="evidence" value="ECO:0007669"/>
    <property type="project" value="UniProtKB-UniRule"/>
</dbReference>
<dbReference type="GO" id="GO:0008652">
    <property type="term" value="P:amino acid biosynthetic process"/>
    <property type="evidence" value="ECO:0007669"/>
    <property type="project" value="UniProtKB-KW"/>
</dbReference>
<dbReference type="GO" id="GO:0009073">
    <property type="term" value="P:aromatic amino acid family biosynthetic process"/>
    <property type="evidence" value="ECO:0007669"/>
    <property type="project" value="UniProtKB-KW"/>
</dbReference>
<dbReference type="GO" id="GO:0009423">
    <property type="term" value="P:chorismate biosynthetic process"/>
    <property type="evidence" value="ECO:0007669"/>
    <property type="project" value="UniProtKB-UniRule"/>
</dbReference>
<dbReference type="GO" id="GO:0019631">
    <property type="term" value="P:quinate catabolic process"/>
    <property type="evidence" value="ECO:0007669"/>
    <property type="project" value="TreeGrafter"/>
</dbReference>
<dbReference type="CDD" id="cd00466">
    <property type="entry name" value="DHQase_II"/>
    <property type="match status" value="1"/>
</dbReference>
<dbReference type="Gene3D" id="3.40.50.9100">
    <property type="entry name" value="Dehydroquinase, class II"/>
    <property type="match status" value="1"/>
</dbReference>
<dbReference type="HAMAP" id="MF_00169">
    <property type="entry name" value="AroQ"/>
    <property type="match status" value="1"/>
</dbReference>
<dbReference type="InterPro" id="IPR001874">
    <property type="entry name" value="DHquinase_II"/>
</dbReference>
<dbReference type="InterPro" id="IPR018509">
    <property type="entry name" value="DHquinase_II_CS"/>
</dbReference>
<dbReference type="InterPro" id="IPR036441">
    <property type="entry name" value="DHquinase_II_sf"/>
</dbReference>
<dbReference type="NCBIfam" id="TIGR01088">
    <property type="entry name" value="aroQ"/>
    <property type="match status" value="1"/>
</dbReference>
<dbReference type="NCBIfam" id="NF003805">
    <property type="entry name" value="PRK05395.1-2"/>
    <property type="match status" value="1"/>
</dbReference>
<dbReference type="NCBIfam" id="NF003806">
    <property type="entry name" value="PRK05395.1-3"/>
    <property type="match status" value="1"/>
</dbReference>
<dbReference type="NCBIfam" id="NF003807">
    <property type="entry name" value="PRK05395.1-4"/>
    <property type="match status" value="1"/>
</dbReference>
<dbReference type="PANTHER" id="PTHR21272">
    <property type="entry name" value="CATABOLIC 3-DEHYDROQUINASE"/>
    <property type="match status" value="1"/>
</dbReference>
<dbReference type="PANTHER" id="PTHR21272:SF3">
    <property type="entry name" value="CATABOLIC 3-DEHYDROQUINASE"/>
    <property type="match status" value="1"/>
</dbReference>
<dbReference type="Pfam" id="PF01220">
    <property type="entry name" value="DHquinase_II"/>
    <property type="match status" value="1"/>
</dbReference>
<dbReference type="PIRSF" id="PIRSF001399">
    <property type="entry name" value="DHquinase_II"/>
    <property type="match status" value="1"/>
</dbReference>
<dbReference type="SUPFAM" id="SSF52304">
    <property type="entry name" value="Type II 3-dehydroquinate dehydratase"/>
    <property type="match status" value="1"/>
</dbReference>
<dbReference type="PROSITE" id="PS01029">
    <property type="entry name" value="DEHYDROQUINASE_II"/>
    <property type="match status" value="1"/>
</dbReference>
<feature type="chain" id="PRO_0000159863" description="3-dehydroquinate dehydratase 1">
    <location>
        <begin position="1"/>
        <end position="145"/>
    </location>
</feature>
<feature type="active site" description="Proton acceptor" evidence="1">
    <location>
        <position position="24"/>
    </location>
</feature>
<feature type="active site" description="Proton donor" evidence="1">
    <location>
        <position position="101"/>
    </location>
</feature>
<feature type="binding site" evidence="1">
    <location>
        <position position="75"/>
    </location>
    <ligand>
        <name>substrate</name>
    </ligand>
</feature>
<feature type="binding site" evidence="1">
    <location>
        <position position="81"/>
    </location>
    <ligand>
        <name>substrate</name>
    </ligand>
</feature>
<feature type="binding site" evidence="1">
    <location>
        <position position="88"/>
    </location>
    <ligand>
        <name>substrate</name>
    </ligand>
</feature>
<feature type="binding site" evidence="1">
    <location>
        <begin position="102"/>
        <end position="103"/>
    </location>
    <ligand>
        <name>substrate</name>
    </ligand>
</feature>
<feature type="binding site" evidence="1">
    <location>
        <position position="112"/>
    </location>
    <ligand>
        <name>substrate</name>
    </ligand>
</feature>
<feature type="site" description="Transition state stabilizer" evidence="1">
    <location>
        <position position="19"/>
    </location>
</feature>
<name>AROQ1_AGRFC</name>
<gene>
    <name type="primary">aroQ1</name>
    <name type="ordered locus">Atu1332</name>
    <name type="ORF">AGR_C_2456</name>
</gene>
<comment type="function">
    <text evidence="1">Catalyzes a trans-dehydration via an enolate intermediate.</text>
</comment>
<comment type="catalytic activity">
    <reaction>
        <text>3-dehydroquinate = 3-dehydroshikimate + H2O</text>
        <dbReference type="Rhea" id="RHEA:21096"/>
        <dbReference type="ChEBI" id="CHEBI:15377"/>
        <dbReference type="ChEBI" id="CHEBI:16630"/>
        <dbReference type="ChEBI" id="CHEBI:32364"/>
        <dbReference type="EC" id="4.2.1.10"/>
    </reaction>
</comment>
<comment type="pathway">
    <text>Metabolic intermediate biosynthesis; chorismate biosynthesis; chorismate from D-erythrose 4-phosphate and phosphoenolpyruvate: step 3/7.</text>
</comment>
<comment type="subunit">
    <text evidence="1">Homododecamer.</text>
</comment>
<comment type="similarity">
    <text evidence="2">Belongs to the type-II 3-dehydroquinase family.</text>
</comment>